<organism>
    <name type="scientific">Marchantia polymorpha</name>
    <name type="common">Common liverwort</name>
    <name type="synonym">Marchantia aquatica</name>
    <dbReference type="NCBI Taxonomy" id="3197"/>
    <lineage>
        <taxon>Eukaryota</taxon>
        <taxon>Viridiplantae</taxon>
        <taxon>Streptophyta</taxon>
        <taxon>Embryophyta</taxon>
        <taxon>Marchantiophyta</taxon>
        <taxon>Marchantiopsida</taxon>
        <taxon>Marchantiidae</taxon>
        <taxon>Marchantiales</taxon>
        <taxon>Marchantiaceae</taxon>
        <taxon>Marchantia</taxon>
    </lineage>
</organism>
<feature type="chain" id="PRO_0000188273" description="ATP synthase epsilon chain, chloroplastic">
    <location>
        <begin position="1"/>
        <end position="135"/>
    </location>
</feature>
<protein>
    <recommendedName>
        <fullName evidence="1">ATP synthase epsilon chain, chloroplastic</fullName>
    </recommendedName>
    <alternativeName>
        <fullName evidence="1">ATP synthase F1 sector epsilon subunit</fullName>
    </alternativeName>
    <alternativeName>
        <fullName evidence="1">F-ATPase epsilon subunit</fullName>
    </alternativeName>
</protein>
<name>ATPE_MARPO</name>
<proteinExistence type="inferred from homology"/>
<sequence>MLNLRIMAPNRIVWNSDIQEIILSTNSGQIGILPNHASVLTALDIGIVKIRLNDQWSTMALMGGFAMIDNNNLTILVNDAEKASEIDYQEAQETFQKAKTNLEEAEGNKKKEIEALLVFKRAKARLEAINMASKL</sequence>
<comment type="function">
    <text evidence="1">Produces ATP from ADP in the presence of a proton gradient across the membrane.</text>
</comment>
<comment type="subunit">
    <text evidence="1">F-type ATPases have 2 components, CF(1) - the catalytic core - and CF(0) - the membrane proton channel. CF(1) has five subunits: alpha(3), beta(3), gamma(1), delta(1), epsilon(1). CF(0) has three main subunits: a, b and c.</text>
</comment>
<comment type="subcellular location">
    <subcellularLocation>
        <location evidence="1">Plastid</location>
        <location evidence="1">Chloroplast thylakoid membrane</location>
        <topology evidence="1">Peripheral membrane protein</topology>
    </subcellularLocation>
</comment>
<comment type="similarity">
    <text evidence="1">Belongs to the ATPase epsilon chain family.</text>
</comment>
<gene>
    <name evidence="1" type="primary">atpE</name>
</gene>
<geneLocation type="chloroplast"/>
<keyword id="KW-0066">ATP synthesis</keyword>
<keyword id="KW-0139">CF(1)</keyword>
<keyword id="KW-0150">Chloroplast</keyword>
<keyword id="KW-0375">Hydrogen ion transport</keyword>
<keyword id="KW-0406">Ion transport</keyword>
<keyword id="KW-0472">Membrane</keyword>
<keyword id="KW-0934">Plastid</keyword>
<keyword id="KW-0793">Thylakoid</keyword>
<keyword id="KW-0813">Transport</keyword>
<dbReference type="EMBL" id="X04465">
    <property type="protein sequence ID" value="CAA28090.1"/>
    <property type="molecule type" value="Genomic_DNA"/>
</dbReference>
<dbReference type="PIR" id="A01033">
    <property type="entry name" value="PWLVE"/>
</dbReference>
<dbReference type="RefSeq" id="NP_039304.1">
    <property type="nucleotide sequence ID" value="NC_001319.1"/>
</dbReference>
<dbReference type="SMR" id="P06285"/>
<dbReference type="GeneID" id="2702552"/>
<dbReference type="GO" id="GO:0009535">
    <property type="term" value="C:chloroplast thylakoid membrane"/>
    <property type="evidence" value="ECO:0007669"/>
    <property type="project" value="UniProtKB-SubCell"/>
</dbReference>
<dbReference type="GO" id="GO:0045259">
    <property type="term" value="C:proton-transporting ATP synthase complex"/>
    <property type="evidence" value="ECO:0007669"/>
    <property type="project" value="UniProtKB-KW"/>
</dbReference>
<dbReference type="GO" id="GO:0005524">
    <property type="term" value="F:ATP binding"/>
    <property type="evidence" value="ECO:0007669"/>
    <property type="project" value="UniProtKB-UniRule"/>
</dbReference>
<dbReference type="GO" id="GO:0046933">
    <property type="term" value="F:proton-transporting ATP synthase activity, rotational mechanism"/>
    <property type="evidence" value="ECO:0007669"/>
    <property type="project" value="UniProtKB-UniRule"/>
</dbReference>
<dbReference type="CDD" id="cd12152">
    <property type="entry name" value="F1-ATPase_delta"/>
    <property type="match status" value="1"/>
</dbReference>
<dbReference type="FunFam" id="2.60.15.10:FF:000002">
    <property type="entry name" value="ATP synthase epsilon chain, chloroplastic"/>
    <property type="match status" value="1"/>
</dbReference>
<dbReference type="Gene3D" id="6.10.140.480">
    <property type="match status" value="1"/>
</dbReference>
<dbReference type="Gene3D" id="2.60.15.10">
    <property type="entry name" value="F0F1 ATP synthase delta/epsilon subunit, N-terminal"/>
    <property type="match status" value="1"/>
</dbReference>
<dbReference type="HAMAP" id="MF_00530">
    <property type="entry name" value="ATP_synth_epsil_bac"/>
    <property type="match status" value="1"/>
</dbReference>
<dbReference type="InterPro" id="IPR001469">
    <property type="entry name" value="ATP_synth_F1_dsu/esu"/>
</dbReference>
<dbReference type="InterPro" id="IPR020546">
    <property type="entry name" value="ATP_synth_F1_dsu/esu_N"/>
</dbReference>
<dbReference type="InterPro" id="IPR020547">
    <property type="entry name" value="ATP_synth_F1_esu_C"/>
</dbReference>
<dbReference type="InterPro" id="IPR036771">
    <property type="entry name" value="ATPsynth_dsu/esu_N"/>
</dbReference>
<dbReference type="NCBIfam" id="TIGR01216">
    <property type="entry name" value="ATP_synt_epsi"/>
    <property type="match status" value="1"/>
</dbReference>
<dbReference type="PANTHER" id="PTHR13822">
    <property type="entry name" value="ATP SYNTHASE DELTA/EPSILON CHAIN"/>
    <property type="match status" value="1"/>
</dbReference>
<dbReference type="PANTHER" id="PTHR13822:SF10">
    <property type="entry name" value="ATP SYNTHASE EPSILON CHAIN, CHLOROPLASTIC"/>
    <property type="match status" value="1"/>
</dbReference>
<dbReference type="Pfam" id="PF00401">
    <property type="entry name" value="ATP-synt_DE"/>
    <property type="match status" value="1"/>
</dbReference>
<dbReference type="Pfam" id="PF02823">
    <property type="entry name" value="ATP-synt_DE_N"/>
    <property type="match status" value="1"/>
</dbReference>
<dbReference type="SUPFAM" id="SSF51344">
    <property type="entry name" value="Epsilon subunit of F1F0-ATP synthase N-terminal domain"/>
    <property type="match status" value="1"/>
</dbReference>
<accession>P06285</accession>
<evidence type="ECO:0000255" key="1">
    <source>
        <dbReference type="HAMAP-Rule" id="MF_00530"/>
    </source>
</evidence>
<reference key="1">
    <citation type="journal article" date="1986" name="Nature">
        <title>Chloroplast gene organization deduced from complete sequence of liverwort Marchantia polymorpha chloroplast DNA.</title>
        <authorList>
            <person name="Ohyama K."/>
            <person name="Fukuzawa H."/>
            <person name="Kohchi T."/>
            <person name="Shirai H."/>
            <person name="Sano T."/>
            <person name="Sano S."/>
            <person name="Umesono K."/>
            <person name="Shiki Y."/>
            <person name="Takeuchi M."/>
            <person name="Chang Z."/>
            <person name="Aota S."/>
            <person name="Inokuchi H."/>
            <person name="Ozeki H."/>
        </authorList>
    </citation>
    <scope>NUCLEOTIDE SEQUENCE [LARGE SCALE GENOMIC DNA]</scope>
</reference>
<reference key="2">
    <citation type="journal article" date="1988" name="J. Mol. Biol.">
        <title>Structure and organization of Marchantia polymorpha chloroplast genome. II. Gene organization of the large single copy region from rps'12 to atpB.</title>
        <authorList>
            <person name="Umesono K."/>
            <person name="Inokuchi H."/>
            <person name="Shiki Y."/>
            <person name="Takeuchi M."/>
            <person name="Chang Z."/>
            <person name="Fukuzawa H."/>
            <person name="Kohchi T."/>
            <person name="Shirai H."/>
            <person name="Ohyama K."/>
            <person name="Ozeki H."/>
        </authorList>
    </citation>
    <scope>NUCLEOTIDE SEQUENCE [GENOMIC DNA]</scope>
</reference>